<keyword id="KW-1185">Reference proteome</keyword>
<feature type="chain" id="PRO_0000106515" description="Protein 7.7">
    <location>
        <begin position="1"/>
        <end position="130"/>
    </location>
</feature>
<organism>
    <name type="scientific">Escherichia phage T7</name>
    <name type="common">Bacteriophage T7</name>
    <dbReference type="NCBI Taxonomy" id="10760"/>
    <lineage>
        <taxon>Viruses</taxon>
        <taxon>Duplodnaviria</taxon>
        <taxon>Heunggongvirae</taxon>
        <taxon>Uroviricota</taxon>
        <taxon>Caudoviricetes</taxon>
        <taxon>Autographiviridae</taxon>
        <taxon>Studiervirinae</taxon>
        <taxon>Teseptimavirus</taxon>
        <taxon>Teseptimavirus T7</taxon>
    </lineage>
</organism>
<organismHost>
    <name type="scientific">Escherichia coli</name>
    <dbReference type="NCBI Taxonomy" id="562"/>
</organismHost>
<proteinExistence type="predicted"/>
<name>Y77_BPT7</name>
<accession>P03796</accession>
<sequence>MEDCIEWTGGVNSKGYGRKWVNGKLVTPHRHIYEETYGPVPTGIVVMHICDNPRCYNIKHLTLGTPKDNSEDMVTKGRQAKGEELSKKLTESDVLAIRSSTLSHRSLGELYGVSQSTITRILQRKTWRHI</sequence>
<dbReference type="EMBL" id="V01146">
    <property type="protein sequence ID" value="CAA24424.1"/>
    <property type="molecule type" value="Genomic_DNA"/>
</dbReference>
<dbReference type="PIR" id="A04421">
    <property type="entry name" value="Q7BP77"/>
</dbReference>
<dbReference type="RefSeq" id="NP_041994.1">
    <property type="nucleotide sequence ID" value="NC_001604.1"/>
</dbReference>
<dbReference type="SMR" id="P03796"/>
<dbReference type="KEGG" id="vg:1261028"/>
<dbReference type="OrthoDB" id="21336at10239"/>
<dbReference type="Proteomes" id="UP000000840">
    <property type="component" value="Genome"/>
</dbReference>
<dbReference type="GO" id="GO:0004519">
    <property type="term" value="F:endonuclease activity"/>
    <property type="evidence" value="ECO:0007669"/>
    <property type="project" value="InterPro"/>
</dbReference>
<dbReference type="Gene3D" id="3.90.75.10">
    <property type="entry name" value="Homing Intron 3 (I-ppo) Encoded Endonuclease, Chain A"/>
    <property type="match status" value="1"/>
</dbReference>
<dbReference type="InterPro" id="IPR044925">
    <property type="entry name" value="His-Me_finger_sf"/>
</dbReference>
<dbReference type="InterPro" id="IPR003615">
    <property type="entry name" value="HNH_nuc"/>
</dbReference>
<dbReference type="InterPro" id="IPR044930">
    <property type="entry name" value="Homing_endonuclease_His-Me"/>
</dbReference>
<dbReference type="Pfam" id="PF13392">
    <property type="entry name" value="HNH_3"/>
    <property type="match status" value="1"/>
</dbReference>
<dbReference type="SUPFAM" id="SSF54060">
    <property type="entry name" value="His-Me finger endonucleases"/>
    <property type="match status" value="1"/>
</dbReference>
<gene>
    <name type="ordered locus">7.7</name>
</gene>
<protein>
    <recommendedName>
        <fullName>Protein 7.7</fullName>
    </recommendedName>
    <alternativeName>
        <fullName>Gene product 7.7</fullName>
        <shortName>Gp7.7</shortName>
    </alternativeName>
</protein>
<reference key="1">
    <citation type="journal article" date="1983" name="J. Mol. Biol.">
        <title>Complete nucleotide sequence of bacteriophage T7 DNA and the locations of T7 genetic elements.</title>
        <authorList>
            <person name="Dunn J.J."/>
            <person name="Studier F.W."/>
        </authorList>
    </citation>
    <scope>NUCLEOTIDE SEQUENCE [LARGE SCALE GENOMIC DNA]</scope>
</reference>